<evidence type="ECO:0000255" key="1">
    <source>
        <dbReference type="HAMAP-Rule" id="MF_04053"/>
    </source>
</evidence>
<evidence type="ECO:0000256" key="2">
    <source>
        <dbReference type="SAM" id="MobiDB-lite"/>
    </source>
</evidence>
<evidence type="ECO:0000305" key="3"/>
<feature type="chain" id="PRO_0000221907" description="Core-capsid bridging protein">
    <location>
        <begin position="1"/>
        <end position="361"/>
    </location>
</feature>
<feature type="region of interest" description="Disordered" evidence="2">
    <location>
        <begin position="311"/>
        <end position="331"/>
    </location>
</feature>
<feature type="compositionally biased region" description="Basic residues" evidence="2">
    <location>
        <begin position="311"/>
        <end position="321"/>
    </location>
</feature>
<accession>Q96625</accession>
<sequence length="361" mass="40847">MSSRKIKEEMLEIIAPELYAPRHRRSVKAETKSRVKKEEIKSKRKWKRPQIDDLLTEDVEVVGATAPRRPYQWRGRKVKRVLRPGTVITFTPGVRSRERASKRSSDEIFADEDILEQYERGEGEFRYGKRSKAEAAVVLDTSNPTPSLHPVTPQMPIVHTSAAKRSAVPTVEVLAPKKRRFTESSDQLAVDMVTETSTVPPGTAVLLPARAVKQARRRFPVAVESKKPEHMVVEEVKVRDVKPVAPGIGVQTIDFKVPVDAPKPPVSITEQMDISSTPAKKVAYGPANKIIPVAWQHPSQMGFPKYVRPKRRRRVARRSKSTGRFVAAPRKRTPRRKIVLPAVRYHPSLDTVPRSQVAIWR</sequence>
<protein>
    <recommendedName>
        <fullName evidence="1">Core-capsid bridging protein</fullName>
    </recommendedName>
    <alternativeName>
        <fullName evidence="1">Core protein V</fullName>
    </alternativeName>
</protein>
<organism>
    <name type="scientific">Bovine adenovirus 2</name>
    <name type="common">BAdV-2</name>
    <name type="synonym">Mastadenovirus bos2</name>
    <dbReference type="NCBI Taxonomy" id="114429"/>
    <lineage>
        <taxon>Viruses</taxon>
        <taxon>Varidnaviria</taxon>
        <taxon>Bamfordvirae</taxon>
        <taxon>Preplasmiviricota</taxon>
        <taxon>Tectiliviricetes</taxon>
        <taxon>Rowavirales</taxon>
        <taxon>Adenoviridae</taxon>
        <taxon>Mastadenovirus</taxon>
        <taxon>Ovine mastadenovirus A</taxon>
    </lineage>
</organism>
<dbReference type="EMBL" id="U44123">
    <property type="protein sequence ID" value="AAB16757.1"/>
    <property type="molecule type" value="Genomic_DNA"/>
</dbReference>
<dbReference type="GO" id="GO:0044196">
    <property type="term" value="C:host cell nucleolus"/>
    <property type="evidence" value="ECO:0007669"/>
    <property type="project" value="UniProtKB-SubCell"/>
</dbReference>
<dbReference type="GO" id="GO:0044423">
    <property type="term" value="C:virion component"/>
    <property type="evidence" value="ECO:0007669"/>
    <property type="project" value="UniProtKB-UniRule"/>
</dbReference>
<dbReference type="GO" id="GO:0003677">
    <property type="term" value="F:DNA binding"/>
    <property type="evidence" value="ECO:0007669"/>
    <property type="project" value="UniProtKB-UniRule"/>
</dbReference>
<dbReference type="GO" id="GO:0019076">
    <property type="term" value="P:viral release from host cell"/>
    <property type="evidence" value="ECO:0007669"/>
    <property type="project" value="UniProtKB-UniRule"/>
</dbReference>
<dbReference type="HAMAP" id="MF_04053">
    <property type="entry name" value="ADV_CORE5"/>
    <property type="match status" value="1"/>
</dbReference>
<dbReference type="InterPro" id="IPR005608">
    <property type="entry name" value="Adeno_V"/>
</dbReference>
<dbReference type="Pfam" id="PF03910">
    <property type="entry name" value="Adeno_PV"/>
    <property type="match status" value="2"/>
</dbReference>
<comment type="function">
    <text evidence="1">Associates loosely with the viral DNA to form an outer shell around the nucleoprotein-DNA complex and links it with the capsid by binding the endosome lysis protein. Dissociates from the viral genome during entry. Might be involved in nuclear capsid assembly of the viral particles through its association with NPM1/nucleophosmin.</text>
</comment>
<comment type="subunit">
    <text evidence="1">Monomer. Homodimer. Exists in equilibrium between monomers and dimers in solution. Interacts with the histone-like nucleoprotein; this interactions bridge the virus core to the capsid. Interacts with core protein X; this interactions bridge the virus core to the capsid. Interacts with the endosome lysis protein VI; this interactions bridge the virus core to the capsid. Interacts with the peripentonal hexons. Interacts with host NPM1; this interaction might play a role in virus assembly.</text>
</comment>
<comment type="subcellular location">
    <subcellularLocation>
        <location evidence="1">Virion</location>
    </subcellularLocation>
    <subcellularLocation>
        <location evidence="1">Host nucleus</location>
        <location evidence="1">Host nucleolus</location>
    </subcellularLocation>
    <text evidence="1">Located inside the capsid (core). Present in 157 copies per virion. Localizes in the nucleoli during infection, then translocates from the nucleoli to the nucleoplasm as the infection progresses and is finally incorporated into the viral particles.</text>
</comment>
<comment type="induction">
    <text evidence="1">Expressed in the late phase of the viral replicative cycle.</text>
</comment>
<comment type="miscellaneous">
    <text evidence="1">All late proteins expressed from the major late promoter are produced by alternative splicing and alternative polyadenylation of the same gene giving rise to non-overlapping ORFs. A leader sequence is present in the N-terminus of all these mRNAs and is recognized by the viral shutoff protein to provide expression although conventional translation via ribosome scanning from the cap has been shut off in the host cell.</text>
</comment>
<comment type="miscellaneous">
    <text evidence="1">This protein is only encoded by mastadenoviruses, and may therefore play a role in mammals tropism.</text>
</comment>
<comment type="similarity">
    <text evidence="1 3">Belongs to the adenoviridae core-capsid bridging protein family.</text>
</comment>
<reference key="1">
    <citation type="journal article" date="2000" name="Virus Res.">
        <title>Identification and sequence analysis of the core protein genes of bovine adenovirus 2.</title>
        <authorList>
            <person name="Rusvai M."/>
            <person name="Harrach B."/>
            <person name="Banrevi A."/>
            <person name="Evans P.S."/>
            <person name="Benko M."/>
        </authorList>
    </citation>
    <scope>NUCLEOTIDE SEQUENCE [GENOMIC DNA]</scope>
</reference>
<name>CORE5_ADEB2</name>
<organismHost>
    <name type="scientific">Bos taurus</name>
    <name type="common">Bovine</name>
    <dbReference type="NCBI Taxonomy" id="9913"/>
</organismHost>
<proteinExistence type="inferred from homology"/>
<gene>
    <name evidence="1" type="primary">L2</name>
</gene>
<keyword id="KW-0238">DNA-binding</keyword>
<keyword id="KW-1048">Host nucleus</keyword>
<keyword id="KW-0426">Late protein</keyword>
<keyword id="KW-0118">Viral capsid assembly</keyword>
<keyword id="KW-1188">Viral release from host cell</keyword>
<keyword id="KW-0946">Virion</keyword>